<reference key="1">
    <citation type="journal article" date="2005" name="Nucleic Acids Res.">
        <title>Genome dynamics and diversity of Shigella species, the etiologic agents of bacillary dysentery.</title>
        <authorList>
            <person name="Yang F."/>
            <person name="Yang J."/>
            <person name="Zhang X."/>
            <person name="Chen L."/>
            <person name="Jiang Y."/>
            <person name="Yan Y."/>
            <person name="Tang X."/>
            <person name="Wang J."/>
            <person name="Xiong Z."/>
            <person name="Dong J."/>
            <person name="Xue Y."/>
            <person name="Zhu Y."/>
            <person name="Xu X."/>
            <person name="Sun L."/>
            <person name="Chen S."/>
            <person name="Nie H."/>
            <person name="Peng J."/>
            <person name="Xu J."/>
            <person name="Wang Y."/>
            <person name="Yuan Z."/>
            <person name="Wen Y."/>
            <person name="Yao Z."/>
            <person name="Shen Y."/>
            <person name="Qiang B."/>
            <person name="Hou Y."/>
            <person name="Yu J."/>
            <person name="Jin Q."/>
        </authorList>
    </citation>
    <scope>NUCLEOTIDE SEQUENCE [LARGE SCALE GENOMIC DNA]</scope>
    <source>
        <strain>Ss046</strain>
    </source>
</reference>
<evidence type="ECO:0000255" key="1">
    <source>
        <dbReference type="HAMAP-Rule" id="MF_00104"/>
    </source>
</evidence>
<proteinExistence type="inferred from homology"/>
<name>RNC_SHISS</name>
<accession>Q3YYU9</accession>
<feature type="chain" id="PRO_0000228582" description="Ribonuclease 3">
    <location>
        <begin position="1"/>
        <end position="226"/>
    </location>
</feature>
<feature type="domain" description="RNase III" evidence="1">
    <location>
        <begin position="6"/>
        <end position="128"/>
    </location>
</feature>
<feature type="domain" description="DRBM" evidence="1">
    <location>
        <begin position="155"/>
        <end position="225"/>
    </location>
</feature>
<feature type="active site" evidence="1">
    <location>
        <position position="45"/>
    </location>
</feature>
<feature type="active site" evidence="1">
    <location>
        <position position="117"/>
    </location>
</feature>
<feature type="binding site" evidence="1">
    <location>
        <position position="41"/>
    </location>
    <ligand>
        <name>Mg(2+)</name>
        <dbReference type="ChEBI" id="CHEBI:18420"/>
    </ligand>
</feature>
<feature type="binding site" evidence="1">
    <location>
        <position position="114"/>
    </location>
    <ligand>
        <name>Mg(2+)</name>
        <dbReference type="ChEBI" id="CHEBI:18420"/>
    </ligand>
</feature>
<feature type="binding site" evidence="1">
    <location>
        <position position="117"/>
    </location>
    <ligand>
        <name>Mg(2+)</name>
        <dbReference type="ChEBI" id="CHEBI:18420"/>
    </ligand>
</feature>
<gene>
    <name evidence="1" type="primary">rnc</name>
    <name type="ordered locus">SSON_2691</name>
</gene>
<keyword id="KW-0963">Cytoplasm</keyword>
<keyword id="KW-0255">Endonuclease</keyword>
<keyword id="KW-0378">Hydrolase</keyword>
<keyword id="KW-0460">Magnesium</keyword>
<keyword id="KW-0479">Metal-binding</keyword>
<keyword id="KW-0507">mRNA processing</keyword>
<keyword id="KW-0540">Nuclease</keyword>
<keyword id="KW-1185">Reference proteome</keyword>
<keyword id="KW-0694">RNA-binding</keyword>
<keyword id="KW-0698">rRNA processing</keyword>
<keyword id="KW-0699">rRNA-binding</keyword>
<keyword id="KW-0819">tRNA processing</keyword>
<comment type="function">
    <text evidence="1">Digests double-stranded RNA. Involved in the processing of primary rRNA transcript to yield the immediate precursors to the large and small rRNAs (23S and 16S). Processes some mRNAs, and tRNAs when they are encoded in the rRNA operon. Processes pre-crRNA and tracrRNA of type II CRISPR loci if present in the organism.</text>
</comment>
<comment type="catalytic activity">
    <reaction evidence="1">
        <text>Endonucleolytic cleavage to 5'-phosphomonoester.</text>
        <dbReference type="EC" id="3.1.26.3"/>
    </reaction>
</comment>
<comment type="cofactor">
    <cofactor evidence="1">
        <name>Mg(2+)</name>
        <dbReference type="ChEBI" id="CHEBI:18420"/>
    </cofactor>
</comment>
<comment type="subunit">
    <text evidence="1">Homodimer.</text>
</comment>
<comment type="subcellular location">
    <subcellularLocation>
        <location evidence="1">Cytoplasm</location>
    </subcellularLocation>
</comment>
<comment type="similarity">
    <text evidence="1">Belongs to the ribonuclease III family.</text>
</comment>
<sequence>MNPIVINRLQRKLGYTFNHQELLQQALTHRSASSKHNERLEFLGDSILSYVIANALYHRFPRVDEGDMSRMRATLVRGNTLAELAREFELGECLRLGPGELKSGGFRRESILADTVEALIGGVFLDSDIQTVEKLILNWYQTRLDEISPGDKQKDPKTRLQEYLQGRHLPLPTYLVVQVRGEAHDQEFTIHCQVSGLSEPVVGTGSSRRKAEQAAAEQALKKLELE</sequence>
<protein>
    <recommendedName>
        <fullName evidence="1">Ribonuclease 3</fullName>
        <ecNumber evidence="1">3.1.26.3</ecNumber>
    </recommendedName>
    <alternativeName>
        <fullName evidence="1">Ribonuclease III</fullName>
        <shortName evidence="1">RNase III</shortName>
    </alternativeName>
</protein>
<dbReference type="EC" id="3.1.26.3" evidence="1"/>
<dbReference type="EMBL" id="CP000038">
    <property type="protein sequence ID" value="AAZ89313.1"/>
    <property type="molecule type" value="Genomic_DNA"/>
</dbReference>
<dbReference type="RefSeq" id="WP_001068343.1">
    <property type="nucleotide sequence ID" value="NC_007384.1"/>
</dbReference>
<dbReference type="SMR" id="Q3YYU9"/>
<dbReference type="GeneID" id="93774524"/>
<dbReference type="KEGG" id="ssn:SSON_2691"/>
<dbReference type="HOGENOM" id="CLU_000907_1_1_6"/>
<dbReference type="Proteomes" id="UP000002529">
    <property type="component" value="Chromosome"/>
</dbReference>
<dbReference type="GO" id="GO:0005737">
    <property type="term" value="C:cytoplasm"/>
    <property type="evidence" value="ECO:0007669"/>
    <property type="project" value="UniProtKB-SubCell"/>
</dbReference>
<dbReference type="GO" id="GO:0003725">
    <property type="term" value="F:double-stranded RNA binding"/>
    <property type="evidence" value="ECO:0007669"/>
    <property type="project" value="TreeGrafter"/>
</dbReference>
<dbReference type="GO" id="GO:0046872">
    <property type="term" value="F:metal ion binding"/>
    <property type="evidence" value="ECO:0007669"/>
    <property type="project" value="UniProtKB-KW"/>
</dbReference>
<dbReference type="GO" id="GO:0004525">
    <property type="term" value="F:ribonuclease III activity"/>
    <property type="evidence" value="ECO:0007669"/>
    <property type="project" value="UniProtKB-UniRule"/>
</dbReference>
<dbReference type="GO" id="GO:0019843">
    <property type="term" value="F:rRNA binding"/>
    <property type="evidence" value="ECO:0007669"/>
    <property type="project" value="UniProtKB-KW"/>
</dbReference>
<dbReference type="GO" id="GO:0006397">
    <property type="term" value="P:mRNA processing"/>
    <property type="evidence" value="ECO:0007669"/>
    <property type="project" value="UniProtKB-UniRule"/>
</dbReference>
<dbReference type="GO" id="GO:0010468">
    <property type="term" value="P:regulation of gene expression"/>
    <property type="evidence" value="ECO:0007669"/>
    <property type="project" value="TreeGrafter"/>
</dbReference>
<dbReference type="GO" id="GO:0006364">
    <property type="term" value="P:rRNA processing"/>
    <property type="evidence" value="ECO:0007669"/>
    <property type="project" value="UniProtKB-UniRule"/>
</dbReference>
<dbReference type="GO" id="GO:0008033">
    <property type="term" value="P:tRNA processing"/>
    <property type="evidence" value="ECO:0007669"/>
    <property type="project" value="UniProtKB-KW"/>
</dbReference>
<dbReference type="CDD" id="cd10845">
    <property type="entry name" value="DSRM_RNAse_III_family"/>
    <property type="match status" value="1"/>
</dbReference>
<dbReference type="CDD" id="cd00593">
    <property type="entry name" value="RIBOc"/>
    <property type="match status" value="1"/>
</dbReference>
<dbReference type="FunFam" id="1.10.1520.10:FF:000001">
    <property type="entry name" value="Ribonuclease 3"/>
    <property type="match status" value="1"/>
</dbReference>
<dbReference type="FunFam" id="3.30.160.20:FF:000003">
    <property type="entry name" value="Ribonuclease 3"/>
    <property type="match status" value="1"/>
</dbReference>
<dbReference type="Gene3D" id="3.30.160.20">
    <property type="match status" value="1"/>
</dbReference>
<dbReference type="Gene3D" id="1.10.1520.10">
    <property type="entry name" value="Ribonuclease III domain"/>
    <property type="match status" value="1"/>
</dbReference>
<dbReference type="HAMAP" id="MF_00104">
    <property type="entry name" value="RNase_III"/>
    <property type="match status" value="1"/>
</dbReference>
<dbReference type="InterPro" id="IPR014720">
    <property type="entry name" value="dsRBD_dom"/>
</dbReference>
<dbReference type="InterPro" id="IPR011907">
    <property type="entry name" value="RNase_III"/>
</dbReference>
<dbReference type="InterPro" id="IPR000999">
    <property type="entry name" value="RNase_III_dom"/>
</dbReference>
<dbReference type="InterPro" id="IPR036389">
    <property type="entry name" value="RNase_III_sf"/>
</dbReference>
<dbReference type="NCBIfam" id="TIGR02191">
    <property type="entry name" value="RNaseIII"/>
    <property type="match status" value="1"/>
</dbReference>
<dbReference type="PANTHER" id="PTHR11207:SF0">
    <property type="entry name" value="RIBONUCLEASE 3"/>
    <property type="match status" value="1"/>
</dbReference>
<dbReference type="PANTHER" id="PTHR11207">
    <property type="entry name" value="RIBONUCLEASE III"/>
    <property type="match status" value="1"/>
</dbReference>
<dbReference type="Pfam" id="PF00035">
    <property type="entry name" value="dsrm"/>
    <property type="match status" value="1"/>
</dbReference>
<dbReference type="Pfam" id="PF14622">
    <property type="entry name" value="Ribonucleas_3_3"/>
    <property type="match status" value="1"/>
</dbReference>
<dbReference type="SMART" id="SM00358">
    <property type="entry name" value="DSRM"/>
    <property type="match status" value="1"/>
</dbReference>
<dbReference type="SMART" id="SM00535">
    <property type="entry name" value="RIBOc"/>
    <property type="match status" value="1"/>
</dbReference>
<dbReference type="SUPFAM" id="SSF54768">
    <property type="entry name" value="dsRNA-binding domain-like"/>
    <property type="match status" value="1"/>
</dbReference>
<dbReference type="SUPFAM" id="SSF69065">
    <property type="entry name" value="RNase III domain-like"/>
    <property type="match status" value="1"/>
</dbReference>
<dbReference type="PROSITE" id="PS50137">
    <property type="entry name" value="DS_RBD"/>
    <property type="match status" value="1"/>
</dbReference>
<dbReference type="PROSITE" id="PS00517">
    <property type="entry name" value="RNASE_3_1"/>
    <property type="match status" value="1"/>
</dbReference>
<dbReference type="PROSITE" id="PS50142">
    <property type="entry name" value="RNASE_3_2"/>
    <property type="match status" value="1"/>
</dbReference>
<organism>
    <name type="scientific">Shigella sonnei (strain Ss046)</name>
    <dbReference type="NCBI Taxonomy" id="300269"/>
    <lineage>
        <taxon>Bacteria</taxon>
        <taxon>Pseudomonadati</taxon>
        <taxon>Pseudomonadota</taxon>
        <taxon>Gammaproteobacteria</taxon>
        <taxon>Enterobacterales</taxon>
        <taxon>Enterobacteriaceae</taxon>
        <taxon>Shigella</taxon>
    </lineage>
</organism>